<sequence>MVRVTFLGHSAFLLEGSKRVLIDPWIEGNPQSPIKIEECKGADVYIVTHDHGDHGLEDAIKLSKRHGGTVVSIYEIAEEARRKGANSLGANIGSFFEVNGVKVVLTKALHSSNLGAPVGAVIELDGKRVYHAGDTGVFYDMKIIGELYKPDLALLPIGGHFVMGPLEASLAIELLGVSKVIPMHYQTFPVLKGKPEELKEHLGRRGIKAEIIALKPGESYEL</sequence>
<evidence type="ECO:0000255" key="1">
    <source>
        <dbReference type="HAMAP-Rule" id="MF_00457"/>
    </source>
</evidence>
<name>Y055_KORCO</name>
<proteinExistence type="inferred from homology"/>
<accession>B1L7I8</accession>
<gene>
    <name type="ordered locus">Kcr_0055</name>
</gene>
<reference key="1">
    <citation type="journal article" date="2008" name="Proc. Natl. Acad. Sci. U.S.A.">
        <title>A korarchaeal genome reveals new insights into the evolution of the Archaea.</title>
        <authorList>
            <person name="Elkins J.G."/>
            <person name="Podar M."/>
            <person name="Graham D.E."/>
            <person name="Makarova K.S."/>
            <person name="Wolf Y."/>
            <person name="Randau L."/>
            <person name="Hedlund B.P."/>
            <person name="Brochier-Armanet C."/>
            <person name="Kunin V."/>
            <person name="Anderson I."/>
            <person name="Lapidus A."/>
            <person name="Goltsman E."/>
            <person name="Barry K."/>
            <person name="Koonin E.V."/>
            <person name="Hugenholtz P."/>
            <person name="Kyrpides N."/>
            <person name="Wanner G."/>
            <person name="Richardson P."/>
            <person name="Keller M."/>
            <person name="Stetter K.O."/>
        </authorList>
    </citation>
    <scope>NUCLEOTIDE SEQUENCE [LARGE SCALE GENOMIC DNA]</scope>
    <source>
        <strain>OPF8</strain>
    </source>
</reference>
<protein>
    <recommendedName>
        <fullName evidence="1">UPF0173 metal-dependent hydrolase Kcr_0055</fullName>
    </recommendedName>
</protein>
<dbReference type="EMBL" id="CP000968">
    <property type="protein sequence ID" value="ACB06815.1"/>
    <property type="molecule type" value="Genomic_DNA"/>
</dbReference>
<dbReference type="RefSeq" id="WP_012308712.1">
    <property type="nucleotide sequence ID" value="NC_010482.1"/>
</dbReference>
<dbReference type="SMR" id="B1L7I8"/>
<dbReference type="FunCoup" id="B1L7I8">
    <property type="interactions" value="8"/>
</dbReference>
<dbReference type="STRING" id="374847.Kcr_0055"/>
<dbReference type="EnsemblBacteria" id="ACB06815">
    <property type="protein sequence ID" value="ACB06815"/>
    <property type="gene ID" value="Kcr_0055"/>
</dbReference>
<dbReference type="GeneID" id="6093344"/>
<dbReference type="KEGG" id="kcr:Kcr_0055"/>
<dbReference type="eggNOG" id="arCOG00497">
    <property type="taxonomic scope" value="Archaea"/>
</dbReference>
<dbReference type="HOGENOM" id="CLU_070010_4_0_2"/>
<dbReference type="InParanoid" id="B1L7I8"/>
<dbReference type="OrthoDB" id="28313at2157"/>
<dbReference type="PhylomeDB" id="B1L7I8"/>
<dbReference type="Proteomes" id="UP000001686">
    <property type="component" value="Chromosome"/>
</dbReference>
<dbReference type="GO" id="GO:0016787">
    <property type="term" value="F:hydrolase activity"/>
    <property type="evidence" value="ECO:0000318"/>
    <property type="project" value="GO_Central"/>
</dbReference>
<dbReference type="Gene3D" id="3.60.15.10">
    <property type="entry name" value="Ribonuclease Z/Hydroxyacylglutathione hydrolase-like"/>
    <property type="match status" value="1"/>
</dbReference>
<dbReference type="HAMAP" id="MF_00457">
    <property type="entry name" value="UPF0173"/>
    <property type="match status" value="1"/>
</dbReference>
<dbReference type="InterPro" id="IPR001279">
    <property type="entry name" value="Metallo-B-lactamas"/>
</dbReference>
<dbReference type="InterPro" id="IPR036866">
    <property type="entry name" value="RibonucZ/Hydroxyglut_hydro"/>
</dbReference>
<dbReference type="InterPro" id="IPR022877">
    <property type="entry name" value="UPF0173"/>
</dbReference>
<dbReference type="InterPro" id="IPR050114">
    <property type="entry name" value="UPF0173_UPF0282_UlaG_hydrolase"/>
</dbReference>
<dbReference type="NCBIfam" id="NF001911">
    <property type="entry name" value="PRK00685.1"/>
    <property type="match status" value="1"/>
</dbReference>
<dbReference type="PANTHER" id="PTHR43546:SF3">
    <property type="entry name" value="UPF0173 METAL-DEPENDENT HYDROLASE MJ1163"/>
    <property type="match status" value="1"/>
</dbReference>
<dbReference type="PANTHER" id="PTHR43546">
    <property type="entry name" value="UPF0173 METAL-DEPENDENT HYDROLASE MJ1163-RELATED"/>
    <property type="match status" value="1"/>
</dbReference>
<dbReference type="Pfam" id="PF12706">
    <property type="entry name" value="Lactamase_B_2"/>
    <property type="match status" value="1"/>
</dbReference>
<dbReference type="SMART" id="SM00849">
    <property type="entry name" value="Lactamase_B"/>
    <property type="match status" value="1"/>
</dbReference>
<dbReference type="SUPFAM" id="SSF56281">
    <property type="entry name" value="Metallo-hydrolase/oxidoreductase"/>
    <property type="match status" value="1"/>
</dbReference>
<feature type="chain" id="PRO_0000367229" description="UPF0173 metal-dependent hydrolase Kcr_0055">
    <location>
        <begin position="1"/>
        <end position="222"/>
    </location>
</feature>
<comment type="similarity">
    <text evidence="1">Belongs to the UPF0173 family.</text>
</comment>
<organism>
    <name type="scientific">Korarchaeum cryptofilum (strain OPF8)</name>
    <dbReference type="NCBI Taxonomy" id="374847"/>
    <lineage>
        <taxon>Archaea</taxon>
        <taxon>Thermoproteota</taxon>
        <taxon>Candidatus Korarchaeia</taxon>
        <taxon>Candidatus Korarchaeales</taxon>
        <taxon>Candidatus Korarchaeaceae</taxon>
        <taxon>Candidatus Korarchaeum</taxon>
    </lineage>
</organism>
<keyword id="KW-0378">Hydrolase</keyword>
<keyword id="KW-1185">Reference proteome</keyword>